<sequence>MDKILILDFGSQVTQLIARRVREAHVYCELHSFDMPIEEIQAFAPKAIILSGGPNSVYESDYQADPKLFELGVPVLGICYGMQFMAQTLGGKVESGDKREFGYAQIKARHHSKLLEGLQDQIDDAGNGFLDVWMSHGDKVTQLPAGFQVIAETPSCPYAAMADEARGFYGVQFHPEVTHTKRGTEMIHRFVLHVAGCKPSWTMPNYIDEAVKKIREQVGDEEVILGLSGGVDSSVAAALIHRAIGDQLTCVFVDHGLLRLNEGKMVMEMFAQNLGVKVVHVQAEADFMAKLAGETDPEKKRKIIGAEFIEVFDRESGKLTNAKWLAQGTIYPDVIESAGAKTKKAHTIKSHHNVGGLPEDMNLKLLEPLRELFKDEVRQLGVALGLPHDMVYRHPFPGPGLGVRILGEVKKEYADLLRQADAIFIEELRNTVDEKTGKNWYELTSQAFAVFLPVKSVGVMGDGRTYDYVVALRAVVTSDFMTAHWAELPYSLLGRASNRIINEVRGINRVVYDVSGKPPATIEWE</sequence>
<comment type="function">
    <text evidence="1">Catalyzes the synthesis of GMP from XMP.</text>
</comment>
<comment type="catalytic activity">
    <reaction evidence="1">
        <text>XMP + L-glutamine + ATP + H2O = GMP + L-glutamate + AMP + diphosphate + 2 H(+)</text>
        <dbReference type="Rhea" id="RHEA:11680"/>
        <dbReference type="ChEBI" id="CHEBI:15377"/>
        <dbReference type="ChEBI" id="CHEBI:15378"/>
        <dbReference type="ChEBI" id="CHEBI:29985"/>
        <dbReference type="ChEBI" id="CHEBI:30616"/>
        <dbReference type="ChEBI" id="CHEBI:33019"/>
        <dbReference type="ChEBI" id="CHEBI:57464"/>
        <dbReference type="ChEBI" id="CHEBI:58115"/>
        <dbReference type="ChEBI" id="CHEBI:58359"/>
        <dbReference type="ChEBI" id="CHEBI:456215"/>
        <dbReference type="EC" id="6.3.5.2"/>
    </reaction>
</comment>
<comment type="pathway">
    <text evidence="1">Purine metabolism; GMP biosynthesis; GMP from XMP (L-Gln route): step 1/1.</text>
</comment>
<comment type="subunit">
    <text evidence="1">Homodimer.</text>
</comment>
<reference key="1">
    <citation type="journal article" date="2003" name="Proc. Natl. Acad. Sci. U.S.A.">
        <title>The complete genome sequence of Chromobacterium violaceum reveals remarkable and exploitable bacterial adaptability.</title>
        <authorList>
            <person name="Vasconcelos A.T.R."/>
            <person name="de Almeida D.F."/>
            <person name="Hungria M."/>
            <person name="Guimaraes C.T."/>
            <person name="Antonio R.V."/>
            <person name="Almeida F.C."/>
            <person name="de Almeida L.G.P."/>
            <person name="de Almeida R."/>
            <person name="Alves-Gomes J.A."/>
            <person name="Andrade E.M."/>
            <person name="Araripe J."/>
            <person name="de Araujo M.F.F."/>
            <person name="Astolfi-Filho S."/>
            <person name="Azevedo V."/>
            <person name="Baptista A.J."/>
            <person name="Bataus L.A.M."/>
            <person name="Batista J.S."/>
            <person name="Belo A."/>
            <person name="van den Berg C."/>
            <person name="Bogo M."/>
            <person name="Bonatto S."/>
            <person name="Bordignon J."/>
            <person name="Brigido M.M."/>
            <person name="Brito C.A."/>
            <person name="Brocchi M."/>
            <person name="Burity H.A."/>
            <person name="Camargo A.A."/>
            <person name="Cardoso D.D.P."/>
            <person name="Carneiro N.P."/>
            <person name="Carraro D.M."/>
            <person name="Carvalho C.M.B."/>
            <person name="Cascardo J.C.M."/>
            <person name="Cavada B.S."/>
            <person name="Chueire L.M.O."/>
            <person name="Creczynski-Pasa T.B."/>
            <person name="Cunha-Junior N.C."/>
            <person name="Fagundes N."/>
            <person name="Falcao C.L."/>
            <person name="Fantinatti F."/>
            <person name="Farias I.P."/>
            <person name="Felipe M.S.S."/>
            <person name="Ferrari L.P."/>
            <person name="Ferro J.A."/>
            <person name="Ferro M.I.T."/>
            <person name="Franco G.R."/>
            <person name="Freitas N.S.A."/>
            <person name="Furlan L.R."/>
            <person name="Gazzinelli R.T."/>
            <person name="Gomes E.A."/>
            <person name="Goncalves P.R."/>
            <person name="Grangeiro T.B."/>
            <person name="Grattapaglia D."/>
            <person name="Grisard E.C."/>
            <person name="Hanna E.S."/>
            <person name="Jardim S.N."/>
            <person name="Laurino J."/>
            <person name="Leoi L.C.T."/>
            <person name="Lima L.F.A."/>
            <person name="Loureiro M.F."/>
            <person name="Lyra M.C.C.P."/>
            <person name="Madeira H.M.F."/>
            <person name="Manfio G.P."/>
            <person name="Maranhao A.Q."/>
            <person name="Martins W.S."/>
            <person name="di Mauro S.M.Z."/>
            <person name="de Medeiros S.R.B."/>
            <person name="Meissner R.V."/>
            <person name="Moreira M.A.M."/>
            <person name="Nascimento F.F."/>
            <person name="Nicolas M.F."/>
            <person name="Oliveira J.G."/>
            <person name="Oliveira S.C."/>
            <person name="Paixao R.F.C."/>
            <person name="Parente J.A."/>
            <person name="Pedrosa F.O."/>
            <person name="Pena S.D.J."/>
            <person name="Pereira J.O."/>
            <person name="Pereira M."/>
            <person name="Pinto L.S.R.C."/>
            <person name="Pinto L.S."/>
            <person name="Porto J.I.R."/>
            <person name="Potrich D.P."/>
            <person name="Ramalho-Neto C.E."/>
            <person name="Reis A.M.M."/>
            <person name="Rigo L.U."/>
            <person name="Rondinelli E."/>
            <person name="Santos E.B.P."/>
            <person name="Santos F.R."/>
            <person name="Schneider M.P.C."/>
            <person name="Seuanez H.N."/>
            <person name="Silva A.M.R."/>
            <person name="da Silva A.L.C."/>
            <person name="Silva D.W."/>
            <person name="Silva R."/>
            <person name="Simoes I.C."/>
            <person name="Simon D."/>
            <person name="Soares C.M.A."/>
            <person name="Soares R.B.A."/>
            <person name="Souza E.M."/>
            <person name="Souza K.R.L."/>
            <person name="Souza R.C."/>
            <person name="Steffens M.B.R."/>
            <person name="Steindel M."/>
            <person name="Teixeira S.R."/>
            <person name="Urmenyi T."/>
            <person name="Vettore A."/>
            <person name="Wassem R."/>
            <person name="Zaha A."/>
            <person name="Simpson A.J.G."/>
        </authorList>
    </citation>
    <scope>NUCLEOTIDE SEQUENCE [LARGE SCALE GENOMIC DNA]</scope>
    <source>
        <strain>ATCC 12472 / DSM 30191 / JCM 1249 / CCUG 213 / NBRC 12614 / NCIMB 9131 / NCTC 9757 / MK</strain>
    </source>
</reference>
<evidence type="ECO:0000255" key="1">
    <source>
        <dbReference type="HAMAP-Rule" id="MF_00344"/>
    </source>
</evidence>
<dbReference type="EC" id="6.3.5.2" evidence="1"/>
<dbReference type="EMBL" id="AE016825">
    <property type="protein sequence ID" value="AAQ61126.1"/>
    <property type="molecule type" value="Genomic_DNA"/>
</dbReference>
<dbReference type="SMR" id="Q7NSG1"/>
<dbReference type="STRING" id="243365.CV_3465"/>
<dbReference type="KEGG" id="cvi:CV_3465"/>
<dbReference type="eggNOG" id="COG0518">
    <property type="taxonomic scope" value="Bacteria"/>
</dbReference>
<dbReference type="eggNOG" id="COG0519">
    <property type="taxonomic scope" value="Bacteria"/>
</dbReference>
<dbReference type="HOGENOM" id="CLU_014340_0_5_4"/>
<dbReference type="UniPathway" id="UPA00189">
    <property type="reaction ID" value="UER00296"/>
</dbReference>
<dbReference type="Proteomes" id="UP000001424">
    <property type="component" value="Chromosome"/>
</dbReference>
<dbReference type="GO" id="GO:0005829">
    <property type="term" value="C:cytosol"/>
    <property type="evidence" value="ECO:0007669"/>
    <property type="project" value="TreeGrafter"/>
</dbReference>
<dbReference type="GO" id="GO:0005524">
    <property type="term" value="F:ATP binding"/>
    <property type="evidence" value="ECO:0007669"/>
    <property type="project" value="UniProtKB-UniRule"/>
</dbReference>
<dbReference type="GO" id="GO:0003921">
    <property type="term" value="F:GMP synthase activity"/>
    <property type="evidence" value="ECO:0007669"/>
    <property type="project" value="InterPro"/>
</dbReference>
<dbReference type="CDD" id="cd01742">
    <property type="entry name" value="GATase1_GMP_Synthase"/>
    <property type="match status" value="1"/>
</dbReference>
<dbReference type="CDD" id="cd01997">
    <property type="entry name" value="GMP_synthase_C"/>
    <property type="match status" value="1"/>
</dbReference>
<dbReference type="FunFam" id="3.30.300.10:FF:000002">
    <property type="entry name" value="GMP synthase [glutamine-hydrolyzing]"/>
    <property type="match status" value="1"/>
</dbReference>
<dbReference type="FunFam" id="3.40.50.620:FF:000001">
    <property type="entry name" value="GMP synthase [glutamine-hydrolyzing]"/>
    <property type="match status" value="1"/>
</dbReference>
<dbReference type="FunFam" id="3.40.50.880:FF:000001">
    <property type="entry name" value="GMP synthase [glutamine-hydrolyzing]"/>
    <property type="match status" value="1"/>
</dbReference>
<dbReference type="Gene3D" id="3.30.300.10">
    <property type="match status" value="1"/>
</dbReference>
<dbReference type="Gene3D" id="3.40.50.880">
    <property type="match status" value="1"/>
</dbReference>
<dbReference type="Gene3D" id="3.40.50.620">
    <property type="entry name" value="HUPs"/>
    <property type="match status" value="1"/>
</dbReference>
<dbReference type="HAMAP" id="MF_00344">
    <property type="entry name" value="GMP_synthase"/>
    <property type="match status" value="1"/>
</dbReference>
<dbReference type="InterPro" id="IPR029062">
    <property type="entry name" value="Class_I_gatase-like"/>
</dbReference>
<dbReference type="InterPro" id="IPR017926">
    <property type="entry name" value="GATASE"/>
</dbReference>
<dbReference type="InterPro" id="IPR001674">
    <property type="entry name" value="GMP_synth_C"/>
</dbReference>
<dbReference type="InterPro" id="IPR004739">
    <property type="entry name" value="GMP_synth_GATase"/>
</dbReference>
<dbReference type="InterPro" id="IPR022955">
    <property type="entry name" value="GMP_synthase"/>
</dbReference>
<dbReference type="InterPro" id="IPR025777">
    <property type="entry name" value="GMPS_ATP_PPase_dom"/>
</dbReference>
<dbReference type="InterPro" id="IPR022310">
    <property type="entry name" value="NAD/GMP_synthase"/>
</dbReference>
<dbReference type="InterPro" id="IPR014729">
    <property type="entry name" value="Rossmann-like_a/b/a_fold"/>
</dbReference>
<dbReference type="NCBIfam" id="TIGR00884">
    <property type="entry name" value="guaA_Cterm"/>
    <property type="match status" value="1"/>
</dbReference>
<dbReference type="NCBIfam" id="TIGR00888">
    <property type="entry name" value="guaA_Nterm"/>
    <property type="match status" value="1"/>
</dbReference>
<dbReference type="NCBIfam" id="NF000848">
    <property type="entry name" value="PRK00074.1"/>
    <property type="match status" value="1"/>
</dbReference>
<dbReference type="PANTHER" id="PTHR11922:SF2">
    <property type="entry name" value="GMP SYNTHASE [GLUTAMINE-HYDROLYZING]"/>
    <property type="match status" value="1"/>
</dbReference>
<dbReference type="PANTHER" id="PTHR11922">
    <property type="entry name" value="GMP SYNTHASE-RELATED"/>
    <property type="match status" value="1"/>
</dbReference>
<dbReference type="Pfam" id="PF00117">
    <property type="entry name" value="GATase"/>
    <property type="match status" value="1"/>
</dbReference>
<dbReference type="Pfam" id="PF00958">
    <property type="entry name" value="GMP_synt_C"/>
    <property type="match status" value="1"/>
</dbReference>
<dbReference type="Pfam" id="PF02540">
    <property type="entry name" value="NAD_synthase"/>
    <property type="match status" value="1"/>
</dbReference>
<dbReference type="PRINTS" id="PR00097">
    <property type="entry name" value="ANTSNTHASEII"/>
</dbReference>
<dbReference type="PRINTS" id="PR00096">
    <property type="entry name" value="GATASE"/>
</dbReference>
<dbReference type="SUPFAM" id="SSF52402">
    <property type="entry name" value="Adenine nucleotide alpha hydrolases-like"/>
    <property type="match status" value="1"/>
</dbReference>
<dbReference type="SUPFAM" id="SSF52317">
    <property type="entry name" value="Class I glutamine amidotransferase-like"/>
    <property type="match status" value="1"/>
</dbReference>
<dbReference type="SUPFAM" id="SSF54810">
    <property type="entry name" value="GMP synthetase C-terminal dimerisation domain"/>
    <property type="match status" value="1"/>
</dbReference>
<dbReference type="PROSITE" id="PS51273">
    <property type="entry name" value="GATASE_TYPE_1"/>
    <property type="match status" value="1"/>
</dbReference>
<dbReference type="PROSITE" id="PS51553">
    <property type="entry name" value="GMPS_ATP_PPASE"/>
    <property type="match status" value="1"/>
</dbReference>
<name>GUAA_CHRVO</name>
<gene>
    <name evidence="1" type="primary">guaA</name>
    <name type="ordered locus">CV_3465</name>
</gene>
<feature type="chain" id="PRO_0000140112" description="GMP synthase [glutamine-hydrolyzing]">
    <location>
        <begin position="1"/>
        <end position="525"/>
    </location>
</feature>
<feature type="domain" description="Glutamine amidotransferase type-1" evidence="1">
    <location>
        <begin position="3"/>
        <end position="200"/>
    </location>
</feature>
<feature type="domain" description="GMPS ATP-PPase" evidence="1">
    <location>
        <begin position="201"/>
        <end position="393"/>
    </location>
</feature>
<feature type="active site" description="Nucleophile" evidence="1">
    <location>
        <position position="79"/>
    </location>
</feature>
<feature type="active site" evidence="1">
    <location>
        <position position="174"/>
    </location>
</feature>
<feature type="active site" evidence="1">
    <location>
        <position position="176"/>
    </location>
</feature>
<feature type="binding site" evidence="1">
    <location>
        <begin position="228"/>
        <end position="234"/>
    </location>
    <ligand>
        <name>ATP</name>
        <dbReference type="ChEBI" id="CHEBI:30616"/>
    </ligand>
</feature>
<keyword id="KW-0067">ATP-binding</keyword>
<keyword id="KW-0315">Glutamine amidotransferase</keyword>
<keyword id="KW-0332">GMP biosynthesis</keyword>
<keyword id="KW-0436">Ligase</keyword>
<keyword id="KW-0547">Nucleotide-binding</keyword>
<keyword id="KW-0658">Purine biosynthesis</keyword>
<keyword id="KW-1185">Reference proteome</keyword>
<organism>
    <name type="scientific">Chromobacterium violaceum (strain ATCC 12472 / DSM 30191 / JCM 1249 / CCUG 213 / NBRC 12614 / NCIMB 9131 / NCTC 9757 / MK)</name>
    <dbReference type="NCBI Taxonomy" id="243365"/>
    <lineage>
        <taxon>Bacteria</taxon>
        <taxon>Pseudomonadati</taxon>
        <taxon>Pseudomonadota</taxon>
        <taxon>Betaproteobacteria</taxon>
        <taxon>Neisseriales</taxon>
        <taxon>Chromobacteriaceae</taxon>
        <taxon>Chromobacterium</taxon>
    </lineage>
</organism>
<proteinExistence type="inferred from homology"/>
<accession>Q7NSG1</accession>
<protein>
    <recommendedName>
        <fullName evidence="1">GMP synthase [glutamine-hydrolyzing]</fullName>
        <ecNumber evidence="1">6.3.5.2</ecNumber>
    </recommendedName>
    <alternativeName>
        <fullName evidence="1">GMP synthetase</fullName>
    </alternativeName>
    <alternativeName>
        <fullName evidence="1">Glutamine amidotransferase</fullName>
    </alternativeName>
</protein>